<accession>A0RJ83</accession>
<organism>
    <name type="scientific">Bacillus thuringiensis (strain Al Hakam)</name>
    <dbReference type="NCBI Taxonomy" id="412694"/>
    <lineage>
        <taxon>Bacteria</taxon>
        <taxon>Bacillati</taxon>
        <taxon>Bacillota</taxon>
        <taxon>Bacilli</taxon>
        <taxon>Bacillales</taxon>
        <taxon>Bacillaceae</taxon>
        <taxon>Bacillus</taxon>
        <taxon>Bacillus cereus group</taxon>
    </lineage>
</organism>
<sequence length="444" mass="49825">MHILVVSVNYRTAPVEFREKLTFQAAELERAMTTLQNQKSVLENVIVSTCNRTEIYAVVDQLHTGRYYIKKFLADWFQLEIEEVAPYLTIFEQDGAIDHLFRVTCGLDSMVVGETQILGQIKDSFLEAQQVKATGTIFNELFKQVITLAKRAHSETTIGESAMSVSYAAVELGKKIFGELTDCHVLILGAGKMGELALQNLYGSGARKVTVMNRTLSKAEIMAEKYMGHAKPLSELQCALLEADILISSTGASDYVITKEMMTKVEKMRSGRPLFMVDIAVPRDIDPAIDELEGSFLYDIDDLQGVVEANRAERLKEAEKIQFMIEEEIVLFKTWLSTLGVVPLISALRDKALAIQSETMESLERKIPNLSDRERKVISKHTKSIINQLLKDPILVAKEIAAEEGADEKLALFAKIFDLEMEDVESRAEEVEHKRVWTPSVPSL</sequence>
<feature type="chain" id="PRO_1000004595" description="Glutamyl-tRNA reductase">
    <location>
        <begin position="1"/>
        <end position="444"/>
    </location>
</feature>
<feature type="active site" description="Nucleophile" evidence="1">
    <location>
        <position position="50"/>
    </location>
</feature>
<feature type="binding site" evidence="1">
    <location>
        <begin position="49"/>
        <end position="52"/>
    </location>
    <ligand>
        <name>substrate</name>
    </ligand>
</feature>
<feature type="binding site" evidence="1">
    <location>
        <position position="109"/>
    </location>
    <ligand>
        <name>substrate</name>
    </ligand>
</feature>
<feature type="binding site" evidence="1">
    <location>
        <begin position="114"/>
        <end position="116"/>
    </location>
    <ligand>
        <name>substrate</name>
    </ligand>
</feature>
<feature type="binding site" evidence="1">
    <location>
        <position position="120"/>
    </location>
    <ligand>
        <name>substrate</name>
    </ligand>
</feature>
<feature type="binding site" evidence="1">
    <location>
        <begin position="189"/>
        <end position="194"/>
    </location>
    <ligand>
        <name>NADP(+)</name>
        <dbReference type="ChEBI" id="CHEBI:58349"/>
    </ligand>
</feature>
<feature type="site" description="Important for activity" evidence="1">
    <location>
        <position position="99"/>
    </location>
</feature>
<proteinExistence type="inferred from homology"/>
<name>HEM1_BACAH</name>
<evidence type="ECO:0000255" key="1">
    <source>
        <dbReference type="HAMAP-Rule" id="MF_00087"/>
    </source>
</evidence>
<dbReference type="EC" id="1.2.1.70" evidence="1"/>
<dbReference type="EMBL" id="CP000485">
    <property type="protein sequence ID" value="ABK87276.1"/>
    <property type="molecule type" value="Genomic_DNA"/>
</dbReference>
<dbReference type="RefSeq" id="WP_000547860.1">
    <property type="nucleotide sequence ID" value="NC_008600.1"/>
</dbReference>
<dbReference type="SMR" id="A0RJ83"/>
<dbReference type="GeneID" id="45024338"/>
<dbReference type="KEGG" id="btl:BALH_4059"/>
<dbReference type="HOGENOM" id="CLU_035113_2_2_9"/>
<dbReference type="UniPathway" id="UPA00251">
    <property type="reaction ID" value="UER00316"/>
</dbReference>
<dbReference type="GO" id="GO:0008883">
    <property type="term" value="F:glutamyl-tRNA reductase activity"/>
    <property type="evidence" value="ECO:0007669"/>
    <property type="project" value="UniProtKB-UniRule"/>
</dbReference>
<dbReference type="GO" id="GO:0050661">
    <property type="term" value="F:NADP binding"/>
    <property type="evidence" value="ECO:0007669"/>
    <property type="project" value="InterPro"/>
</dbReference>
<dbReference type="GO" id="GO:0006782">
    <property type="term" value="P:protoporphyrinogen IX biosynthetic process"/>
    <property type="evidence" value="ECO:0007669"/>
    <property type="project" value="UniProtKB-UniRule"/>
</dbReference>
<dbReference type="CDD" id="cd05213">
    <property type="entry name" value="NAD_bind_Glutamyl_tRNA_reduct"/>
    <property type="match status" value="1"/>
</dbReference>
<dbReference type="FunFam" id="3.30.460.30:FF:000001">
    <property type="entry name" value="Glutamyl-tRNA reductase"/>
    <property type="match status" value="1"/>
</dbReference>
<dbReference type="FunFam" id="3.40.50.720:FF:000031">
    <property type="entry name" value="Glutamyl-tRNA reductase"/>
    <property type="match status" value="1"/>
</dbReference>
<dbReference type="Gene3D" id="3.30.460.30">
    <property type="entry name" value="Glutamyl-tRNA reductase, N-terminal domain"/>
    <property type="match status" value="1"/>
</dbReference>
<dbReference type="Gene3D" id="3.40.50.720">
    <property type="entry name" value="NAD(P)-binding Rossmann-like Domain"/>
    <property type="match status" value="1"/>
</dbReference>
<dbReference type="HAMAP" id="MF_00087">
    <property type="entry name" value="Glu_tRNA_reductase"/>
    <property type="match status" value="1"/>
</dbReference>
<dbReference type="InterPro" id="IPR000343">
    <property type="entry name" value="4pyrrol_synth_GluRdtase"/>
</dbReference>
<dbReference type="InterPro" id="IPR015896">
    <property type="entry name" value="4pyrrol_synth_GluRdtase_dimer"/>
</dbReference>
<dbReference type="InterPro" id="IPR015895">
    <property type="entry name" value="4pyrrol_synth_GluRdtase_N"/>
</dbReference>
<dbReference type="InterPro" id="IPR018214">
    <property type="entry name" value="GluRdtase_CS"/>
</dbReference>
<dbReference type="InterPro" id="IPR036453">
    <property type="entry name" value="GluRdtase_dimer_dom_sf"/>
</dbReference>
<dbReference type="InterPro" id="IPR036343">
    <property type="entry name" value="GluRdtase_N_sf"/>
</dbReference>
<dbReference type="InterPro" id="IPR036291">
    <property type="entry name" value="NAD(P)-bd_dom_sf"/>
</dbReference>
<dbReference type="InterPro" id="IPR006151">
    <property type="entry name" value="Shikm_DH/Glu-tRNA_Rdtase"/>
</dbReference>
<dbReference type="NCBIfam" id="TIGR01035">
    <property type="entry name" value="hemA"/>
    <property type="match status" value="1"/>
</dbReference>
<dbReference type="PANTHER" id="PTHR43120">
    <property type="entry name" value="GLUTAMYL-TRNA REDUCTASE 1, CHLOROPLASTIC"/>
    <property type="match status" value="1"/>
</dbReference>
<dbReference type="PANTHER" id="PTHR43120:SF1">
    <property type="entry name" value="GLUTAMYL-TRNA REDUCTASE 1, CHLOROPLASTIC"/>
    <property type="match status" value="1"/>
</dbReference>
<dbReference type="Pfam" id="PF00745">
    <property type="entry name" value="GlutR_dimer"/>
    <property type="match status" value="1"/>
</dbReference>
<dbReference type="Pfam" id="PF05201">
    <property type="entry name" value="GlutR_N"/>
    <property type="match status" value="1"/>
</dbReference>
<dbReference type="Pfam" id="PF01488">
    <property type="entry name" value="Shikimate_DH"/>
    <property type="match status" value="1"/>
</dbReference>
<dbReference type="PIRSF" id="PIRSF000445">
    <property type="entry name" value="4pyrrol_synth_GluRdtase"/>
    <property type="match status" value="1"/>
</dbReference>
<dbReference type="SUPFAM" id="SSF69742">
    <property type="entry name" value="Glutamyl tRNA-reductase catalytic, N-terminal domain"/>
    <property type="match status" value="1"/>
</dbReference>
<dbReference type="SUPFAM" id="SSF69075">
    <property type="entry name" value="Glutamyl tRNA-reductase dimerization domain"/>
    <property type="match status" value="1"/>
</dbReference>
<dbReference type="SUPFAM" id="SSF51735">
    <property type="entry name" value="NAD(P)-binding Rossmann-fold domains"/>
    <property type="match status" value="1"/>
</dbReference>
<dbReference type="PROSITE" id="PS00747">
    <property type="entry name" value="GLUTR"/>
    <property type="match status" value="1"/>
</dbReference>
<reference key="1">
    <citation type="journal article" date="2007" name="J. Bacteriol.">
        <title>The complete genome sequence of Bacillus thuringiensis Al Hakam.</title>
        <authorList>
            <person name="Challacombe J.F."/>
            <person name="Altherr M.R."/>
            <person name="Xie G."/>
            <person name="Bhotika S.S."/>
            <person name="Brown N."/>
            <person name="Bruce D."/>
            <person name="Campbell C.S."/>
            <person name="Campbell M.L."/>
            <person name="Chen J."/>
            <person name="Chertkov O."/>
            <person name="Cleland C."/>
            <person name="Dimitrijevic M."/>
            <person name="Doggett N.A."/>
            <person name="Fawcett J.J."/>
            <person name="Glavina T."/>
            <person name="Goodwin L.A."/>
            <person name="Green L.D."/>
            <person name="Han C.S."/>
            <person name="Hill K.K."/>
            <person name="Hitchcock P."/>
            <person name="Jackson P.J."/>
            <person name="Keim P."/>
            <person name="Kewalramani A.R."/>
            <person name="Longmire J."/>
            <person name="Lucas S."/>
            <person name="Malfatti S."/>
            <person name="Martinez D."/>
            <person name="McMurry K."/>
            <person name="Meincke L.J."/>
            <person name="Misra M."/>
            <person name="Moseman B.L."/>
            <person name="Mundt M."/>
            <person name="Munk A.C."/>
            <person name="Okinaka R.T."/>
            <person name="Parson-Quintana B."/>
            <person name="Reilly L.P."/>
            <person name="Richardson P."/>
            <person name="Robinson D.L."/>
            <person name="Saunders E."/>
            <person name="Tapia R."/>
            <person name="Tesmer J.G."/>
            <person name="Thayer N."/>
            <person name="Thompson L.S."/>
            <person name="Tice H."/>
            <person name="Ticknor L.O."/>
            <person name="Wills P.L."/>
            <person name="Gilna P."/>
            <person name="Brettin T.S."/>
        </authorList>
    </citation>
    <scope>NUCLEOTIDE SEQUENCE [LARGE SCALE GENOMIC DNA]</scope>
    <source>
        <strain>Al Hakam</strain>
    </source>
</reference>
<comment type="function">
    <text evidence="1">Catalyzes the NADPH-dependent reduction of glutamyl-tRNA(Glu) to glutamate 1-semialdehyde (GSA).</text>
</comment>
<comment type="catalytic activity">
    <reaction evidence="1">
        <text>(S)-4-amino-5-oxopentanoate + tRNA(Glu) + NADP(+) = L-glutamyl-tRNA(Glu) + NADPH + H(+)</text>
        <dbReference type="Rhea" id="RHEA:12344"/>
        <dbReference type="Rhea" id="RHEA-COMP:9663"/>
        <dbReference type="Rhea" id="RHEA-COMP:9680"/>
        <dbReference type="ChEBI" id="CHEBI:15378"/>
        <dbReference type="ChEBI" id="CHEBI:57501"/>
        <dbReference type="ChEBI" id="CHEBI:57783"/>
        <dbReference type="ChEBI" id="CHEBI:58349"/>
        <dbReference type="ChEBI" id="CHEBI:78442"/>
        <dbReference type="ChEBI" id="CHEBI:78520"/>
        <dbReference type="EC" id="1.2.1.70"/>
    </reaction>
</comment>
<comment type="pathway">
    <text evidence="1">Porphyrin-containing compound metabolism; protoporphyrin-IX biosynthesis; 5-aminolevulinate from L-glutamyl-tRNA(Glu): step 1/2.</text>
</comment>
<comment type="subunit">
    <text evidence="1">Homodimer.</text>
</comment>
<comment type="domain">
    <text evidence="1">Possesses an unusual extended V-shaped dimeric structure with each monomer consisting of three distinct domains arranged along a curved 'spinal' alpha-helix. The N-terminal catalytic domain specifically recognizes the glutamate moiety of the substrate. The second domain is the NADPH-binding domain, and the third C-terminal domain is responsible for dimerization.</text>
</comment>
<comment type="miscellaneous">
    <text evidence="1">During catalysis, the active site Cys acts as a nucleophile attacking the alpha-carbonyl group of tRNA-bound glutamate with the formation of a thioester intermediate between enzyme and glutamate, and the concomitant release of tRNA(Glu). The thioester intermediate is finally reduced by direct hydride transfer from NADPH, to form the product GSA.</text>
</comment>
<comment type="similarity">
    <text evidence="1">Belongs to the glutamyl-tRNA reductase family.</text>
</comment>
<keyword id="KW-0521">NADP</keyword>
<keyword id="KW-0560">Oxidoreductase</keyword>
<keyword id="KW-0627">Porphyrin biosynthesis</keyword>
<protein>
    <recommendedName>
        <fullName evidence="1">Glutamyl-tRNA reductase</fullName>
        <shortName evidence="1">GluTR</shortName>
        <ecNumber evidence="1">1.2.1.70</ecNumber>
    </recommendedName>
</protein>
<gene>
    <name evidence="1" type="primary">hemA</name>
    <name type="ordered locus">BALH_4059</name>
</gene>